<comment type="function">
    <text evidence="1">Prevents the cell division inhibition by proteins MinC and MinD at internal division sites while permitting inhibition at polar sites. This ensures cell division at the proper site by restricting the formation of a division septum at the midpoint of the long axis of the cell.</text>
</comment>
<comment type="similarity">
    <text evidence="1">Belongs to the MinE family.</text>
</comment>
<protein>
    <recommendedName>
        <fullName evidence="1">Cell division topological specificity factor</fullName>
    </recommendedName>
</protein>
<keyword id="KW-0131">Cell cycle</keyword>
<keyword id="KW-0132">Cell division</keyword>
<keyword id="KW-1185">Reference proteome</keyword>
<name>MINE_SHEPA</name>
<sequence length="86" mass="9990">MSLLDYFKTKKEPNTAVTAKERLQIIVAHQRGEREAPDYFPQMKQEIIEVIRKYVQVGPDQVSVQLEQTDDNFSVLELNVTLPEQN</sequence>
<organism>
    <name type="scientific">Shewanella pealeana (strain ATCC 700345 / ANG-SQ1)</name>
    <dbReference type="NCBI Taxonomy" id="398579"/>
    <lineage>
        <taxon>Bacteria</taxon>
        <taxon>Pseudomonadati</taxon>
        <taxon>Pseudomonadota</taxon>
        <taxon>Gammaproteobacteria</taxon>
        <taxon>Alteromonadales</taxon>
        <taxon>Shewanellaceae</taxon>
        <taxon>Shewanella</taxon>
    </lineage>
</organism>
<evidence type="ECO:0000255" key="1">
    <source>
        <dbReference type="HAMAP-Rule" id="MF_00262"/>
    </source>
</evidence>
<reference key="1">
    <citation type="submission" date="2007-10" db="EMBL/GenBank/DDBJ databases">
        <title>Complete sequence of Shewanella pealeana ATCC 700345.</title>
        <authorList>
            <consortium name="US DOE Joint Genome Institute"/>
            <person name="Copeland A."/>
            <person name="Lucas S."/>
            <person name="Lapidus A."/>
            <person name="Barry K."/>
            <person name="Glavina del Rio T."/>
            <person name="Dalin E."/>
            <person name="Tice H."/>
            <person name="Pitluck S."/>
            <person name="Chertkov O."/>
            <person name="Brettin T."/>
            <person name="Bruce D."/>
            <person name="Detter J.C."/>
            <person name="Han C."/>
            <person name="Schmutz J."/>
            <person name="Larimer F."/>
            <person name="Land M."/>
            <person name="Hauser L."/>
            <person name="Kyrpides N."/>
            <person name="Kim E."/>
            <person name="Zhao J.-S.Z."/>
            <person name="Manno D."/>
            <person name="Hawari J."/>
            <person name="Richardson P."/>
        </authorList>
    </citation>
    <scope>NUCLEOTIDE SEQUENCE [LARGE SCALE GENOMIC DNA]</scope>
    <source>
        <strain>ATCC 700345 / ANG-SQ1</strain>
    </source>
</reference>
<proteinExistence type="inferred from homology"/>
<dbReference type="EMBL" id="CP000851">
    <property type="protein sequence ID" value="ABV87766.1"/>
    <property type="molecule type" value="Genomic_DNA"/>
</dbReference>
<dbReference type="RefSeq" id="WP_012155678.1">
    <property type="nucleotide sequence ID" value="NC_009901.1"/>
</dbReference>
<dbReference type="SMR" id="A8H5C9"/>
<dbReference type="STRING" id="398579.Spea_2446"/>
<dbReference type="KEGG" id="spl:Spea_2446"/>
<dbReference type="eggNOG" id="COG0851">
    <property type="taxonomic scope" value="Bacteria"/>
</dbReference>
<dbReference type="HOGENOM" id="CLU_137929_2_2_6"/>
<dbReference type="OrthoDB" id="9802655at2"/>
<dbReference type="Proteomes" id="UP000002608">
    <property type="component" value="Chromosome"/>
</dbReference>
<dbReference type="GO" id="GO:0051301">
    <property type="term" value="P:cell division"/>
    <property type="evidence" value="ECO:0007669"/>
    <property type="project" value="UniProtKB-KW"/>
</dbReference>
<dbReference type="GO" id="GO:0032955">
    <property type="term" value="P:regulation of division septum assembly"/>
    <property type="evidence" value="ECO:0007669"/>
    <property type="project" value="InterPro"/>
</dbReference>
<dbReference type="FunFam" id="3.30.1070.10:FF:000001">
    <property type="entry name" value="Cell division topological specificity factor"/>
    <property type="match status" value="1"/>
</dbReference>
<dbReference type="Gene3D" id="3.30.1070.10">
    <property type="entry name" value="Cell division topological specificity factor MinE"/>
    <property type="match status" value="1"/>
</dbReference>
<dbReference type="HAMAP" id="MF_00262">
    <property type="entry name" value="MinE"/>
    <property type="match status" value="1"/>
</dbReference>
<dbReference type="InterPro" id="IPR005527">
    <property type="entry name" value="MinE"/>
</dbReference>
<dbReference type="InterPro" id="IPR036707">
    <property type="entry name" value="MinE_sf"/>
</dbReference>
<dbReference type="NCBIfam" id="TIGR01215">
    <property type="entry name" value="minE"/>
    <property type="match status" value="1"/>
</dbReference>
<dbReference type="NCBIfam" id="NF001422">
    <property type="entry name" value="PRK00296.1"/>
    <property type="match status" value="1"/>
</dbReference>
<dbReference type="Pfam" id="PF03776">
    <property type="entry name" value="MinE"/>
    <property type="match status" value="1"/>
</dbReference>
<dbReference type="SUPFAM" id="SSF55229">
    <property type="entry name" value="Cell division protein MinE topological specificity domain"/>
    <property type="match status" value="1"/>
</dbReference>
<feature type="chain" id="PRO_1000078648" description="Cell division topological specificity factor">
    <location>
        <begin position="1"/>
        <end position="86"/>
    </location>
</feature>
<accession>A8H5C9</accession>
<gene>
    <name evidence="1" type="primary">minE</name>
    <name type="ordered locus">Spea_2446</name>
</gene>